<sequence length="220" mass="25744">MAEYLASIFGTEKDKVNCSFYFKIGVCRHGDRCSRLHNKPTFSQTIVLLNLYRNPQNTAQTADGSHCHVSDVEVQEHYDSFFEEVFTELQEKYGEIEEMNVCDNLGDHLVGNVYVKFRREEDGERAVAELSNRWFNGQAVHGELSPVTDFRESCCRQYEMGECTRGGFCNFMHLRPISQNLQRQLYGRGPRRRSPPRFHTGHHPRERNHRCSPDHWHGRF</sequence>
<organism>
    <name type="scientific">Homo sapiens</name>
    <name type="common">Human</name>
    <dbReference type="NCBI Taxonomy" id="9606"/>
    <lineage>
        <taxon>Eukaryota</taxon>
        <taxon>Metazoa</taxon>
        <taxon>Chordata</taxon>
        <taxon>Craniata</taxon>
        <taxon>Vertebrata</taxon>
        <taxon>Euteleostomi</taxon>
        <taxon>Mammalia</taxon>
        <taxon>Eutheria</taxon>
        <taxon>Euarchontoglires</taxon>
        <taxon>Primates</taxon>
        <taxon>Haplorrhini</taxon>
        <taxon>Catarrhini</taxon>
        <taxon>Hominidae</taxon>
        <taxon>Homo</taxon>
    </lineage>
</organism>
<comment type="function">
    <text evidence="2">RNA-binding protein that function as a pre-mRNA splicing factor. Plays a critical role in both constitutive and enhancer-dependent splicing by mediating protein-protein interactions and protein-RNA interactions required for accurate 3'-splice site selection. Acts by enhancing the binding of U2AF2 to weak pyrimidine tracts. Also participates in the regulation of alternative pre-mRNA splicing. Activates exon 5 skipping of PTPRC during T-cell activation; an event reversed by GFI1. Binds to RNA at the AG dinucleotide at the 3'-splice site (By similarity). Shows a preference for AGC or AGA (By similarity).</text>
</comment>
<comment type="subunit">
    <text evidence="2">Interacts with GFI1, U2AF2 and C1QBP.</text>
</comment>
<comment type="subcellular location">
    <subcellularLocation>
        <location evidence="2">Nucleus</location>
    </subcellularLocation>
    <subcellularLocation>
        <location evidence="2">Nucleus speckle</location>
    </subcellularLocation>
    <subcellularLocation>
        <location evidence="2">Cytoplasm</location>
    </subcellularLocation>
    <text evidence="2">Interaction with C1QBP is required for the nuclear translocation. Displays active nucleo-cytoplasmic shuttling.</text>
</comment>
<comment type="alternative products">
    <event type="alternative splicing"/>
    <isoform>
        <id>Q8WU68-1</id>
        <name>1</name>
        <sequence type="displayed"/>
    </isoform>
    <isoform>
        <id>Q8WU68-2</id>
        <name>2</name>
        <sequence type="described" ref="VSP_029264 VSP_029265"/>
    </isoform>
    <isoform>
        <id>Q8WU68-3</id>
        <name>3</name>
        <sequence type="described" ref="VSP_029264"/>
    </isoform>
</comment>
<comment type="tissue specificity">
    <text evidence="6">Isoform 2 is widely expressed. Isoform 3 is highly expressed in heart, brain and lung, lower expressed in thymus and much lower expressed in peripheral blood leukocytes.</text>
</comment>
<comment type="domain">
    <text evidence="1">The second zinc finger in necessary for interaction with GFI1 and for alternative pre-mRNA splicing events.</text>
</comment>
<comment type="domain">
    <text evidence="2">The region 162-220 is essential for the nuclear import of the protein in spite of the absence of a nuclear localization signal (NLS). This region is essential for the interaction with C1QBP, interaction which is required for the nuclear translocation. This region may be involved in the localization in nuclear dot-like structures and it also confers the ability of nucleo-cytoplasmic shuttling.</text>
</comment>
<comment type="similarity">
    <text evidence="10">Belongs to the splicing factor SR family.</text>
</comment>
<comment type="caution">
    <text evidence="10">Orthologs of U2AF1L4 do not appear to exist in lower eukaryotes, Drosophila, C.elegans, plants, or vertebrates such as Xenopus or zebrafish. Existence of circadian and light-inducible alternative splicing of U2AF1L4 similar to the mouse in human and rat is not yet proven.</text>
</comment>
<proteinExistence type="evidence at protein level"/>
<gene>
    <name type="primary">U2AF1L4</name>
    <name type="synonym">U2AF1-RS3</name>
    <name type="synonym">U2AF1L3</name>
</gene>
<feature type="initiator methionine" description="Removed" evidence="7">
    <location>
        <position position="1"/>
    </location>
</feature>
<feature type="chain" id="PRO_0000309740" description="Splicing factor U2AF 26 kDa subunit">
    <location>
        <begin position="2"/>
        <end position="220"/>
    </location>
</feature>
<feature type="domain" description="RRM" evidence="3">
    <location>
        <begin position="65"/>
        <end position="147"/>
    </location>
</feature>
<feature type="zinc finger region" description="C3H1-type 1" evidence="4">
    <location>
        <begin position="12"/>
        <end position="40"/>
    </location>
</feature>
<feature type="zinc finger region" description="C3H1-type 2" evidence="4">
    <location>
        <begin position="149"/>
        <end position="176"/>
    </location>
</feature>
<feature type="region of interest" description="Disordered" evidence="5">
    <location>
        <begin position="185"/>
        <end position="220"/>
    </location>
</feature>
<feature type="compositionally biased region" description="Basic residues" evidence="5">
    <location>
        <begin position="189"/>
        <end position="208"/>
    </location>
</feature>
<feature type="compositionally biased region" description="Basic and acidic residues" evidence="5">
    <location>
        <begin position="209"/>
        <end position="220"/>
    </location>
</feature>
<feature type="modified residue" description="N-acetylalanine" evidence="7">
    <location>
        <position position="2"/>
    </location>
</feature>
<feature type="splice variant" id="VSP_029264" description="In isoform 2 and isoform 3." evidence="8 9">
    <location>
        <begin position="45"/>
        <end position="83"/>
    </location>
</feature>
<feature type="splice variant" id="VSP_029265" description="In isoform 2." evidence="9">
    <original>ELSPVTDFRESCCRQYEMGECTRGGFCNFMHLRPISQNLQRQLYGRGPRRRSPPRFHTGHHPRERNHRCSPDHWHGRF</original>
    <variation>NVPEVASATSCICGPFPRTSRGSSMGGDPGAGHPRGSILATIPERGTIGVPLITGMAASEALAPLPFTPNRDRCSWQDLSSKPPSLSCPILPRLPGSIM</variation>
    <location>
        <begin position="143"/>
        <end position="220"/>
    </location>
</feature>
<feature type="sequence conflict" description="In Ref. 3; AAH21186." evidence="10" ref="3">
    <original>L</original>
    <variation>V</variation>
    <location>
        <position position="109"/>
    </location>
</feature>
<reference key="1">
    <citation type="journal article" date="2006" name="DNA Seq.">
        <title>Cloning and characterization of a novel splice variant of human U2AF1L3 gene.</title>
        <authorList>
            <person name="Chen F."/>
            <person name="Ji C."/>
            <person name="Dou T."/>
            <person name="Zheng N."/>
            <person name="Qiu R."/>
            <person name="Peng J."/>
            <person name="Fang W."/>
            <person name="Feng C."/>
            <person name="Xie Y."/>
            <person name="Mao Y."/>
        </authorList>
    </citation>
    <scope>NUCLEOTIDE SEQUENCE [MRNA] (ISOFORM 2)</scope>
    <scope>TISSUE SPECIFICITY</scope>
</reference>
<reference key="2">
    <citation type="journal article" date="2004" name="Nature">
        <title>The DNA sequence and biology of human chromosome 19.</title>
        <authorList>
            <person name="Grimwood J."/>
            <person name="Gordon L.A."/>
            <person name="Olsen A.S."/>
            <person name="Terry A."/>
            <person name="Schmutz J."/>
            <person name="Lamerdin J.E."/>
            <person name="Hellsten U."/>
            <person name="Goodstein D."/>
            <person name="Couronne O."/>
            <person name="Tran-Gyamfi M."/>
            <person name="Aerts A."/>
            <person name="Altherr M."/>
            <person name="Ashworth L."/>
            <person name="Bajorek E."/>
            <person name="Black S."/>
            <person name="Branscomb E."/>
            <person name="Caenepeel S."/>
            <person name="Carrano A.V."/>
            <person name="Caoile C."/>
            <person name="Chan Y.M."/>
            <person name="Christensen M."/>
            <person name="Cleland C.A."/>
            <person name="Copeland A."/>
            <person name="Dalin E."/>
            <person name="Dehal P."/>
            <person name="Denys M."/>
            <person name="Detter J.C."/>
            <person name="Escobar J."/>
            <person name="Flowers D."/>
            <person name="Fotopulos D."/>
            <person name="Garcia C."/>
            <person name="Georgescu A.M."/>
            <person name="Glavina T."/>
            <person name="Gomez M."/>
            <person name="Gonzales E."/>
            <person name="Groza M."/>
            <person name="Hammon N."/>
            <person name="Hawkins T."/>
            <person name="Haydu L."/>
            <person name="Ho I."/>
            <person name="Huang W."/>
            <person name="Israni S."/>
            <person name="Jett J."/>
            <person name="Kadner K."/>
            <person name="Kimball H."/>
            <person name="Kobayashi A."/>
            <person name="Larionov V."/>
            <person name="Leem S.-H."/>
            <person name="Lopez F."/>
            <person name="Lou Y."/>
            <person name="Lowry S."/>
            <person name="Malfatti S."/>
            <person name="Martinez D."/>
            <person name="McCready P.M."/>
            <person name="Medina C."/>
            <person name="Morgan J."/>
            <person name="Nelson K."/>
            <person name="Nolan M."/>
            <person name="Ovcharenko I."/>
            <person name="Pitluck S."/>
            <person name="Pollard M."/>
            <person name="Popkie A.P."/>
            <person name="Predki P."/>
            <person name="Quan G."/>
            <person name="Ramirez L."/>
            <person name="Rash S."/>
            <person name="Retterer J."/>
            <person name="Rodriguez A."/>
            <person name="Rogers S."/>
            <person name="Salamov A."/>
            <person name="Salazar A."/>
            <person name="She X."/>
            <person name="Smith D."/>
            <person name="Slezak T."/>
            <person name="Solovyev V."/>
            <person name="Thayer N."/>
            <person name="Tice H."/>
            <person name="Tsai M."/>
            <person name="Ustaszewska A."/>
            <person name="Vo N."/>
            <person name="Wagner M."/>
            <person name="Wheeler J."/>
            <person name="Wu K."/>
            <person name="Xie G."/>
            <person name="Yang J."/>
            <person name="Dubchak I."/>
            <person name="Furey T.S."/>
            <person name="DeJong P."/>
            <person name="Dickson M."/>
            <person name="Gordon D."/>
            <person name="Eichler E.E."/>
            <person name="Pennacchio L.A."/>
            <person name="Richardson P."/>
            <person name="Stubbs L."/>
            <person name="Rokhsar D.S."/>
            <person name="Myers R.M."/>
            <person name="Rubin E.M."/>
            <person name="Lucas S.M."/>
        </authorList>
    </citation>
    <scope>NUCLEOTIDE SEQUENCE [LARGE SCALE GENOMIC DNA]</scope>
</reference>
<reference key="3">
    <citation type="journal article" date="2004" name="Genome Res.">
        <title>The status, quality, and expansion of the NIH full-length cDNA project: the Mammalian Gene Collection (MGC).</title>
        <authorList>
            <consortium name="The MGC Project Team"/>
        </authorList>
    </citation>
    <scope>NUCLEOTIDE SEQUENCE [LARGE SCALE MRNA] (ISOFORM 3)</scope>
    <source>
        <tissue>Brain</tissue>
    </source>
</reference>
<reference key="4">
    <citation type="submission" date="2008-10" db="UniProtKB">
        <authorList>
            <person name="Bienvenut W.V."/>
            <person name="Zebisch A."/>
            <person name="Kolch W."/>
        </authorList>
    </citation>
    <scope>PROTEIN SEQUENCE OF 2-13</scope>
    <scope>CLEAVAGE OF INITIATOR METHIONINE</scope>
    <scope>ACETYLATION AT ALA-2</scope>
    <scope>IDENTIFICATION BY MASS SPECTROMETRY</scope>
    <source>
        <tissue>Colon carcinoma</tissue>
    </source>
</reference>
<dbReference type="EMBL" id="AY569437">
    <property type="protein sequence ID" value="AAT72770.3"/>
    <property type="molecule type" value="mRNA"/>
</dbReference>
<dbReference type="EMBL" id="AD000671">
    <property type="status" value="NOT_ANNOTATED_CDS"/>
    <property type="molecule type" value="Genomic_DNA"/>
</dbReference>
<dbReference type="EMBL" id="BC021186">
    <property type="protein sequence ID" value="AAH21186.1"/>
    <property type="molecule type" value="mRNA"/>
</dbReference>
<dbReference type="CCDS" id="CCDS12473.1">
    <molecule id="Q8WU68-2"/>
</dbReference>
<dbReference type="CCDS" id="CCDS42551.1">
    <molecule id="Q8WU68-3"/>
</dbReference>
<dbReference type="RefSeq" id="NP_001035515.1">
    <molecule id="Q8WU68-3"/>
    <property type="nucleotide sequence ID" value="NM_001040425.3"/>
</dbReference>
<dbReference type="RefSeq" id="NP_659424.2">
    <molecule id="Q8WU68-2"/>
    <property type="nucleotide sequence ID" value="NM_144987.4"/>
</dbReference>
<dbReference type="SMR" id="Q8WU68"/>
<dbReference type="BioGRID" id="128270">
    <property type="interactions" value="14"/>
</dbReference>
<dbReference type="FunCoup" id="Q8WU68">
    <property type="interactions" value="1972"/>
</dbReference>
<dbReference type="IntAct" id="Q8WU68">
    <property type="interactions" value="10"/>
</dbReference>
<dbReference type="iPTMnet" id="Q8WU68"/>
<dbReference type="PhosphoSitePlus" id="Q8WU68"/>
<dbReference type="BioMuta" id="U2AF1L4"/>
<dbReference type="DMDM" id="160358766"/>
<dbReference type="jPOST" id="Q8WU68"/>
<dbReference type="MassIVE" id="Q8WU68"/>
<dbReference type="PeptideAtlas" id="Q8WU68"/>
<dbReference type="ProteomicsDB" id="74637">
    <molecule id="Q8WU68-1"/>
</dbReference>
<dbReference type="ProteomicsDB" id="74638">
    <molecule id="Q8WU68-2"/>
</dbReference>
<dbReference type="ProteomicsDB" id="74639">
    <molecule id="Q8WU68-3"/>
</dbReference>
<dbReference type="Pumba" id="Q8WU68"/>
<dbReference type="Antibodypedia" id="29506">
    <property type="antibodies" value="119 antibodies from 24 providers"/>
</dbReference>
<dbReference type="DNASU" id="199746"/>
<dbReference type="Ensembl" id="ENST00000292879.9">
    <molecule id="Q8WU68-2"/>
    <property type="protein sequence ID" value="ENSP00000292879.4"/>
    <property type="gene ID" value="ENSG00000161265.15"/>
</dbReference>
<dbReference type="Ensembl" id="ENST00000378975.8">
    <molecule id="Q8WU68-3"/>
    <property type="protein sequence ID" value="ENSP00000368258.2"/>
    <property type="gene ID" value="ENSG00000161265.15"/>
</dbReference>
<dbReference type="Ensembl" id="ENST00000412391.6">
    <molecule id="Q8WU68-1"/>
    <property type="protein sequence ID" value="ENSP00000397645.2"/>
    <property type="gene ID" value="ENSG00000161265.15"/>
</dbReference>
<dbReference type="GeneID" id="199746"/>
<dbReference type="KEGG" id="hsa:199746"/>
<dbReference type="MANE-Select" id="ENST00000378975.8">
    <molecule id="Q8WU68-3"/>
    <property type="protein sequence ID" value="ENSP00000368258.2"/>
    <property type="RefSeq nucleotide sequence ID" value="NM_001040425.3"/>
    <property type="RefSeq protein sequence ID" value="NP_001035515.1"/>
</dbReference>
<dbReference type="UCSC" id="uc002obe.5">
    <molecule id="Q8WU68-1"/>
    <property type="organism name" value="human"/>
</dbReference>
<dbReference type="AGR" id="HGNC:23020"/>
<dbReference type="CTD" id="199746"/>
<dbReference type="DisGeNET" id="199746"/>
<dbReference type="GeneCards" id="U2AF1L4"/>
<dbReference type="HGNC" id="HGNC:23020">
    <property type="gene designation" value="U2AF1L4"/>
</dbReference>
<dbReference type="HPA" id="ENSG00000161265">
    <property type="expression patterns" value="Low tissue specificity"/>
</dbReference>
<dbReference type="MIM" id="601080">
    <property type="type" value="gene"/>
</dbReference>
<dbReference type="neXtProt" id="NX_Q8WU68"/>
<dbReference type="OpenTargets" id="ENSG00000161265"/>
<dbReference type="PharmGKB" id="PA164742763"/>
<dbReference type="VEuPathDB" id="HostDB:ENSG00000161265"/>
<dbReference type="GeneTree" id="ENSGT00950000183152"/>
<dbReference type="HOGENOM" id="CLU_059852_1_0_1"/>
<dbReference type="InParanoid" id="Q8WU68"/>
<dbReference type="OMA" id="NLYRNPH"/>
<dbReference type="OrthoDB" id="9485012at2759"/>
<dbReference type="PAN-GO" id="Q8WU68">
    <property type="GO annotations" value="4 GO annotations based on evolutionary models"/>
</dbReference>
<dbReference type="PhylomeDB" id="Q8WU68"/>
<dbReference type="TreeFam" id="TF300143"/>
<dbReference type="PathwayCommons" id="Q8WU68"/>
<dbReference type="Reactome" id="R-HSA-159236">
    <property type="pathway name" value="Transport of Mature mRNA derived from an Intron-Containing Transcript"/>
</dbReference>
<dbReference type="Reactome" id="R-HSA-72163">
    <property type="pathway name" value="mRNA Splicing - Major Pathway"/>
</dbReference>
<dbReference type="Reactome" id="R-HSA-72187">
    <property type="pathway name" value="mRNA 3'-end processing"/>
</dbReference>
<dbReference type="Reactome" id="R-HSA-73856">
    <property type="pathway name" value="RNA Polymerase II Transcription Termination"/>
</dbReference>
<dbReference type="SignaLink" id="Q8WU68"/>
<dbReference type="BioGRID-ORCS" id="199746">
    <property type="hits" value="15 hits in 1158 CRISPR screens"/>
</dbReference>
<dbReference type="ChiTaRS" id="U2AF1L4">
    <property type="organism name" value="human"/>
</dbReference>
<dbReference type="GenomeRNAi" id="199746"/>
<dbReference type="Pharos" id="Q8WU68">
    <property type="development level" value="Tbio"/>
</dbReference>
<dbReference type="PRO" id="PR:Q8WU68"/>
<dbReference type="Proteomes" id="UP000005640">
    <property type="component" value="Chromosome 19"/>
</dbReference>
<dbReference type="RNAct" id="Q8WU68">
    <property type="molecule type" value="protein"/>
</dbReference>
<dbReference type="Bgee" id="ENSG00000161265">
    <property type="expression patterns" value="Expressed in left lobe of thyroid gland and 98 other cell types or tissues"/>
</dbReference>
<dbReference type="ExpressionAtlas" id="Q8WU68">
    <property type="expression patterns" value="baseline and differential"/>
</dbReference>
<dbReference type="GO" id="GO:0005737">
    <property type="term" value="C:cytoplasm"/>
    <property type="evidence" value="ECO:0007669"/>
    <property type="project" value="UniProtKB-SubCell"/>
</dbReference>
<dbReference type="GO" id="GO:0016607">
    <property type="term" value="C:nuclear speck"/>
    <property type="evidence" value="ECO:0007669"/>
    <property type="project" value="UniProtKB-SubCell"/>
</dbReference>
<dbReference type="GO" id="GO:0005654">
    <property type="term" value="C:nucleoplasm"/>
    <property type="evidence" value="ECO:0000304"/>
    <property type="project" value="Reactome"/>
</dbReference>
<dbReference type="GO" id="GO:0005681">
    <property type="term" value="C:spliceosomal complex"/>
    <property type="evidence" value="ECO:0000318"/>
    <property type="project" value="GO_Central"/>
</dbReference>
<dbReference type="GO" id="GO:0089701">
    <property type="term" value="C:U2AF complex"/>
    <property type="evidence" value="ECO:0000318"/>
    <property type="project" value="GO_Central"/>
</dbReference>
<dbReference type="GO" id="GO:0030628">
    <property type="term" value="F:pre-mRNA 3'-splice site binding"/>
    <property type="evidence" value="ECO:0000318"/>
    <property type="project" value="GO_Central"/>
</dbReference>
<dbReference type="GO" id="GO:0008270">
    <property type="term" value="F:zinc ion binding"/>
    <property type="evidence" value="ECO:0007669"/>
    <property type="project" value="UniProtKB-KW"/>
</dbReference>
<dbReference type="GO" id="GO:0000398">
    <property type="term" value="P:mRNA splicing, via spliceosome"/>
    <property type="evidence" value="ECO:0000318"/>
    <property type="project" value="GO_Central"/>
</dbReference>
<dbReference type="CDD" id="cd12538">
    <property type="entry name" value="RRM_U2AF35"/>
    <property type="match status" value="1"/>
</dbReference>
<dbReference type="FunFam" id="3.30.70.330:FF:000055">
    <property type="entry name" value="Splicing factor U2AF 35 kDa subunit"/>
    <property type="match status" value="1"/>
</dbReference>
<dbReference type="Gene3D" id="3.30.70.330">
    <property type="match status" value="1"/>
</dbReference>
<dbReference type="InterPro" id="IPR012677">
    <property type="entry name" value="Nucleotide-bd_a/b_plait_sf"/>
</dbReference>
<dbReference type="InterPro" id="IPR035979">
    <property type="entry name" value="RBD_domain_sf"/>
</dbReference>
<dbReference type="InterPro" id="IPR000504">
    <property type="entry name" value="RRM_dom"/>
</dbReference>
<dbReference type="InterPro" id="IPR003954">
    <property type="entry name" value="RRM_dom_euk"/>
</dbReference>
<dbReference type="InterPro" id="IPR009145">
    <property type="entry name" value="U2AF_small"/>
</dbReference>
<dbReference type="InterPro" id="IPR000571">
    <property type="entry name" value="Znf_CCCH"/>
</dbReference>
<dbReference type="PANTHER" id="PTHR12620">
    <property type="entry name" value="U2 SNRNP AUXILIARY FACTOR, SMALL SUBUNIT"/>
    <property type="match status" value="1"/>
</dbReference>
<dbReference type="Pfam" id="PF00076">
    <property type="entry name" value="RRM_1"/>
    <property type="match status" value="1"/>
</dbReference>
<dbReference type="Pfam" id="PF00642">
    <property type="entry name" value="zf-CCCH"/>
    <property type="match status" value="2"/>
</dbReference>
<dbReference type="PRINTS" id="PR01848">
    <property type="entry name" value="U2AUXFACTOR"/>
</dbReference>
<dbReference type="SMART" id="SM00361">
    <property type="entry name" value="RRM_1"/>
    <property type="match status" value="1"/>
</dbReference>
<dbReference type="SMART" id="SM00356">
    <property type="entry name" value="ZnF_C3H1"/>
    <property type="match status" value="2"/>
</dbReference>
<dbReference type="SUPFAM" id="SSF54928">
    <property type="entry name" value="RNA-binding domain, RBD"/>
    <property type="match status" value="1"/>
</dbReference>
<dbReference type="PROSITE" id="PS50102">
    <property type="entry name" value="RRM"/>
    <property type="match status" value="1"/>
</dbReference>
<dbReference type="PROSITE" id="PS50103">
    <property type="entry name" value="ZF_C3H1"/>
    <property type="match status" value="2"/>
</dbReference>
<keyword id="KW-0007">Acetylation</keyword>
<keyword id="KW-0025">Alternative splicing</keyword>
<keyword id="KW-0963">Cytoplasm</keyword>
<keyword id="KW-0903">Direct protein sequencing</keyword>
<keyword id="KW-0479">Metal-binding</keyword>
<keyword id="KW-0507">mRNA processing</keyword>
<keyword id="KW-0508">mRNA splicing</keyword>
<keyword id="KW-0539">Nucleus</keyword>
<keyword id="KW-1267">Proteomics identification</keyword>
<keyword id="KW-1185">Reference proteome</keyword>
<keyword id="KW-0677">Repeat</keyword>
<keyword id="KW-0694">RNA-binding</keyword>
<keyword id="KW-0747">Spliceosome</keyword>
<keyword id="KW-0862">Zinc</keyword>
<keyword id="KW-0863">Zinc-finger</keyword>
<protein>
    <recommendedName>
        <fullName>Splicing factor U2AF 26 kDa subunit</fullName>
    </recommendedName>
    <alternativeName>
        <fullName>U2 auxiliary factor 26</fullName>
    </alternativeName>
    <alternativeName>
        <fullName>U2 small nuclear RNA auxiliary factor 1-like protein 4</fullName>
        <shortName evidence="2">U2AF1-like 4</shortName>
    </alternativeName>
    <alternativeName>
        <fullName>U2(RNU2) small nuclear RNA auxiliary factor 1-like protein 3</fullName>
        <shortName>U2 small nuclear RNA auxiliary factor 1-like protein 3</shortName>
        <shortName>U2AF1-like protein 3</shortName>
    </alternativeName>
</protein>
<evidence type="ECO:0000250" key="1"/>
<evidence type="ECO:0000250" key="2">
    <source>
        <dbReference type="UniProtKB" id="Q8BGJ9"/>
    </source>
</evidence>
<evidence type="ECO:0000255" key="3">
    <source>
        <dbReference type="PROSITE-ProRule" id="PRU00176"/>
    </source>
</evidence>
<evidence type="ECO:0000255" key="4">
    <source>
        <dbReference type="PROSITE-ProRule" id="PRU00723"/>
    </source>
</evidence>
<evidence type="ECO:0000256" key="5">
    <source>
        <dbReference type="SAM" id="MobiDB-lite"/>
    </source>
</evidence>
<evidence type="ECO:0000269" key="6">
    <source>
    </source>
</evidence>
<evidence type="ECO:0000269" key="7">
    <source ref="4"/>
</evidence>
<evidence type="ECO:0000303" key="8">
    <source>
    </source>
</evidence>
<evidence type="ECO:0000303" key="9">
    <source>
    </source>
</evidence>
<evidence type="ECO:0000305" key="10"/>
<name>U2AF4_HUMAN</name>
<accession>Q8WU68</accession>
<accession>A6NKI8</accession>
<accession>Q56UU3</accession>